<dbReference type="EC" id="2.3.1.31" evidence="1 2"/>
<dbReference type="EMBL" id="CP002281">
    <property type="protein sequence ID" value="ADO82928.1"/>
    <property type="molecule type" value="Genomic_DNA"/>
</dbReference>
<dbReference type="RefSeq" id="WP_013387595.1">
    <property type="nucleotide sequence ID" value="NC_014632.1"/>
</dbReference>
<dbReference type="SMR" id="E3H7X6"/>
<dbReference type="STRING" id="572544.Ilyop_1147"/>
<dbReference type="KEGG" id="ipo:Ilyop_1147"/>
<dbReference type="eggNOG" id="COG1897">
    <property type="taxonomic scope" value="Bacteria"/>
</dbReference>
<dbReference type="HOGENOM" id="CLU_057851_0_1_0"/>
<dbReference type="OrthoDB" id="9772423at2"/>
<dbReference type="UniPathway" id="UPA00051">
    <property type="reaction ID" value="UER00074"/>
</dbReference>
<dbReference type="Proteomes" id="UP000006875">
    <property type="component" value="Chromosome"/>
</dbReference>
<dbReference type="GO" id="GO:0005737">
    <property type="term" value="C:cytoplasm"/>
    <property type="evidence" value="ECO:0007669"/>
    <property type="project" value="UniProtKB-SubCell"/>
</dbReference>
<dbReference type="GO" id="GO:0004414">
    <property type="term" value="F:homoserine O-acetyltransferase activity"/>
    <property type="evidence" value="ECO:0007669"/>
    <property type="project" value="UniProtKB-EC"/>
</dbReference>
<dbReference type="GO" id="GO:0008899">
    <property type="term" value="F:homoserine O-succinyltransferase activity"/>
    <property type="evidence" value="ECO:0007669"/>
    <property type="project" value="UniProtKB-UniRule"/>
</dbReference>
<dbReference type="GO" id="GO:0019281">
    <property type="term" value="P:L-methionine biosynthetic process from homoserine via O-succinyl-L-homoserine and cystathionine"/>
    <property type="evidence" value="ECO:0007669"/>
    <property type="project" value="InterPro"/>
</dbReference>
<dbReference type="CDD" id="cd03131">
    <property type="entry name" value="GATase1_HTS"/>
    <property type="match status" value="1"/>
</dbReference>
<dbReference type="FunFam" id="3.40.50.880:FF:000004">
    <property type="entry name" value="Homoserine O-succinyltransferase"/>
    <property type="match status" value="1"/>
</dbReference>
<dbReference type="Gene3D" id="3.40.50.880">
    <property type="match status" value="1"/>
</dbReference>
<dbReference type="HAMAP" id="MF_00295">
    <property type="entry name" value="MetA_acyltransf"/>
    <property type="match status" value="1"/>
</dbReference>
<dbReference type="InterPro" id="IPR029062">
    <property type="entry name" value="Class_I_gatase-like"/>
</dbReference>
<dbReference type="InterPro" id="IPR005697">
    <property type="entry name" value="HST_MetA"/>
</dbReference>
<dbReference type="InterPro" id="IPR033752">
    <property type="entry name" value="MetA_family"/>
</dbReference>
<dbReference type="NCBIfam" id="TIGR01001">
    <property type="entry name" value="metA"/>
    <property type="match status" value="1"/>
</dbReference>
<dbReference type="PANTHER" id="PTHR20919">
    <property type="entry name" value="HOMOSERINE O-SUCCINYLTRANSFERASE"/>
    <property type="match status" value="1"/>
</dbReference>
<dbReference type="PANTHER" id="PTHR20919:SF0">
    <property type="entry name" value="HOMOSERINE O-SUCCINYLTRANSFERASE"/>
    <property type="match status" value="1"/>
</dbReference>
<dbReference type="Pfam" id="PF04204">
    <property type="entry name" value="HTS"/>
    <property type="match status" value="1"/>
</dbReference>
<dbReference type="PIRSF" id="PIRSF000450">
    <property type="entry name" value="H_ser_succinyltr"/>
    <property type="match status" value="1"/>
</dbReference>
<dbReference type="SUPFAM" id="SSF52317">
    <property type="entry name" value="Class I glutamine amidotransferase-like"/>
    <property type="match status" value="1"/>
</dbReference>
<name>META1_ILYPC</name>
<evidence type="ECO:0000255" key="1">
    <source>
        <dbReference type="HAMAP-Rule" id="MF_00295"/>
    </source>
</evidence>
<evidence type="ECO:0000269" key="2">
    <source>
    </source>
</evidence>
<evidence type="ECO:0000303" key="3">
    <source>
    </source>
</evidence>
<evidence type="ECO:0000312" key="4">
    <source>
        <dbReference type="EMBL" id="ADO82928.1"/>
    </source>
</evidence>
<keyword id="KW-0012">Acyltransferase</keyword>
<keyword id="KW-0028">Amino-acid biosynthesis</keyword>
<keyword id="KW-0963">Cytoplasm</keyword>
<keyword id="KW-0486">Methionine biosynthesis</keyword>
<keyword id="KW-1185">Reference proteome</keyword>
<keyword id="KW-0808">Transferase</keyword>
<accession>E3H7X6</accession>
<organism>
    <name type="scientific">Ilyobacter polytropus (strain ATCC 51220 / DSM 2926 / LMG 16218 / CuHBu1)</name>
    <dbReference type="NCBI Taxonomy" id="572544"/>
    <lineage>
        <taxon>Bacteria</taxon>
        <taxon>Fusobacteriati</taxon>
        <taxon>Fusobacteriota</taxon>
        <taxon>Fusobacteriia</taxon>
        <taxon>Fusobacteriales</taxon>
        <taxon>Fusobacteriaceae</taxon>
        <taxon>Ilyobacter</taxon>
    </lineage>
</organism>
<protein>
    <recommendedName>
        <fullName evidence="1">Homoserine O-acetyltransferase 1</fullName>
        <shortName evidence="1">HAT 1</shortName>
        <ecNumber evidence="1 2">2.3.1.31</ecNumber>
    </recommendedName>
    <alternativeName>
        <fullName evidence="1">Homoserine transacetylase 1</fullName>
        <shortName evidence="1">HTA 1</shortName>
    </alternativeName>
</protein>
<proteinExistence type="evidence at protein level"/>
<comment type="function">
    <text evidence="1 2">Transfers an acetyl group from acetyl-CoA to L-homoserine, forming acetyl-L-homoserine.</text>
</comment>
<comment type="catalytic activity">
    <reaction evidence="1 2">
        <text>L-homoserine + acetyl-CoA = O-acetyl-L-homoserine + CoA</text>
        <dbReference type="Rhea" id="RHEA:13701"/>
        <dbReference type="ChEBI" id="CHEBI:57287"/>
        <dbReference type="ChEBI" id="CHEBI:57288"/>
        <dbReference type="ChEBI" id="CHEBI:57476"/>
        <dbReference type="ChEBI" id="CHEBI:57716"/>
        <dbReference type="EC" id="2.3.1.31"/>
    </reaction>
</comment>
<comment type="pathway">
    <text evidence="1">Amino-acid biosynthesis; L-methionine biosynthesis via de novo pathway; O-acetyl-L-homoserine from L-homoserine: step 1/1.</text>
</comment>
<comment type="subcellular location">
    <subcellularLocation>
        <location evidence="1">Cytoplasm</location>
    </subcellularLocation>
</comment>
<comment type="similarity">
    <text evidence="1">Belongs to the MetA family.</text>
</comment>
<reference key="1">
    <citation type="journal article" date="2010" name="Stand. Genomic Sci.">
        <title>Complete genome sequence of Ilyobacter polytropus type strain (CuHbu1).</title>
        <authorList>
            <person name="Sikorski J."/>
            <person name="Chertkov O."/>
            <person name="Lapidus A."/>
            <person name="Nolan M."/>
            <person name="Lucas S."/>
            <person name="Del Rio T.G."/>
            <person name="Tice H."/>
            <person name="Cheng J.F."/>
            <person name="Tapia R."/>
            <person name="Han C."/>
            <person name="Goodwin L."/>
            <person name="Pitluck S."/>
            <person name="Liolios K."/>
            <person name="Ivanova N."/>
            <person name="Mavromatis K."/>
            <person name="Mikhailova N."/>
            <person name="Pati A."/>
            <person name="Chen A."/>
            <person name="Palaniappan K."/>
            <person name="Land M."/>
            <person name="Hauser L."/>
            <person name="Chang Y.J."/>
            <person name="Jeffries C.D."/>
            <person name="Brambilla E."/>
            <person name="Yasawong M."/>
            <person name="Rohde M."/>
            <person name="Pukall R."/>
            <person name="Spring S."/>
            <person name="Goker M."/>
            <person name="Woyke T."/>
            <person name="Bristow J."/>
            <person name="Eisen J.A."/>
            <person name="Markowitz V."/>
            <person name="Hugenholtz P."/>
            <person name="Kyrpides N.C."/>
            <person name="Klenk H.P."/>
        </authorList>
    </citation>
    <scope>NUCLEOTIDE SEQUENCE [LARGE SCALE GENOMIC DNA]</scope>
    <source>
        <strain>ATCC 51220 / DSM 2926 / LMG 16218 / CuHBu1</strain>
    </source>
</reference>
<reference key="2">
    <citation type="journal article" date="2017" name="Nat. Chem. Biol.">
        <title>Parallel evolution of non-homologous isofunctional enzymes in methionine biosynthesis.</title>
        <authorList>
            <person name="Bastard K."/>
            <person name="Perret A."/>
            <person name="Mariage A."/>
            <person name="Bessonnet T."/>
            <person name="Pinet-Turpault A."/>
            <person name="Petit J.L."/>
            <person name="Darii E."/>
            <person name="Bazire P."/>
            <person name="Vergne-Vaxelaire C."/>
            <person name="Brewee C."/>
            <person name="Debard A."/>
            <person name="Pellouin V."/>
            <person name="Besnard-Gonnet M."/>
            <person name="Artiguenave F."/>
            <person name="Medigue C."/>
            <person name="Vallenet D."/>
            <person name="Danchin A."/>
            <person name="Zaparucha A."/>
            <person name="Weissenbach J."/>
            <person name="Salanoubat M."/>
            <person name="de Berardinis V."/>
        </authorList>
    </citation>
    <scope>FUNCTION</scope>
    <scope>CATALYTIC ACTIVITY</scope>
</reference>
<gene>
    <name evidence="1 3" type="primary">metAA1</name>
    <name evidence="4" type="ordered locus">Ilyop_1147</name>
</gene>
<feature type="chain" id="PRO_0000440341" description="Homoserine O-acetyltransferase 1">
    <location>
        <begin position="1"/>
        <end position="302"/>
    </location>
</feature>
<feature type="active site" description="Acyl-thioester intermediate" evidence="1">
    <location>
        <position position="142"/>
    </location>
</feature>
<feature type="active site" description="Proton acceptor" evidence="1">
    <location>
        <position position="235"/>
    </location>
</feature>
<feature type="active site" evidence="1">
    <location>
        <position position="237"/>
    </location>
</feature>
<feature type="binding site" evidence="1">
    <location>
        <position position="163"/>
    </location>
    <ligand>
        <name>substrate</name>
    </ligand>
</feature>
<feature type="binding site" evidence="1">
    <location>
        <position position="192"/>
    </location>
    <ligand>
        <name>substrate</name>
    </ligand>
</feature>
<feature type="binding site" evidence="1">
    <location>
        <position position="249"/>
    </location>
    <ligand>
        <name>substrate</name>
    </ligand>
</feature>
<feature type="site" description="Important for acyl-CoA specificity" evidence="1">
    <location>
        <position position="111"/>
    </location>
</feature>
<feature type="site" description="Important for substrate specificity" evidence="1">
    <location>
        <position position="192"/>
    </location>
</feature>
<sequence>MPIVIPKKLPAFDTLKGENIFVMNKSRAFSQDIRPLKIVILNLMPNKIVTETQLLRLLGNTPLQIEITLLKTRTYASKNTSQDHLTSFYKTFEDIKNHTFDGLIITGAPIEHLQFEDVDYWEELKEVMEFSKSNVTSTMHICWGSQAGLYYHYGIPKFPTDKKIFGIFKHKIFNLKTKITRGFDDEFLVPHSRHTTVMRGDIENVPELEILAESEDAGICLVATRDRKHIFISGHLEYEKDTLKSEYFRDLDKGRSIDIPKNYFKDDNPENDPVVTWRAHAHLLFSNWLNYCVYQETPYILK</sequence>